<feature type="chain" id="PRO_0000128151" description="Uncharacterized protein AF_2393">
    <location>
        <begin position="1"/>
        <end position="125"/>
    </location>
</feature>
<feature type="transmembrane region" description="Helical" evidence="1">
    <location>
        <begin position="20"/>
        <end position="42"/>
    </location>
</feature>
<feature type="transmembrane region" description="Helical" evidence="1">
    <location>
        <begin position="57"/>
        <end position="76"/>
    </location>
</feature>
<feature type="transmembrane region" description="Helical" evidence="1">
    <location>
        <begin position="81"/>
        <end position="103"/>
    </location>
</feature>
<accession>O30278</accession>
<sequence length="125" mass="13309">MGCICGHLQLLGCLRHCLNRNGGGTLVVAFAFTAFFSLLTILEVLSALNIFGGEGTLMNAFVLGTITATFAKGVVVRRDSYLFVASLLAAAFSVLMILVYMASGSFSYGIFGLVTVPYLVKKARK</sequence>
<dbReference type="EMBL" id="AE000782">
    <property type="protein sequence ID" value="AAB91279.1"/>
    <property type="molecule type" value="Genomic_DNA"/>
</dbReference>
<dbReference type="PIR" id="B69549">
    <property type="entry name" value="B69549"/>
</dbReference>
<dbReference type="STRING" id="224325.AF_2393"/>
<dbReference type="PaxDb" id="224325-AF_2393"/>
<dbReference type="EnsemblBacteria" id="AAB91279">
    <property type="protein sequence ID" value="AAB91279"/>
    <property type="gene ID" value="AF_2393"/>
</dbReference>
<dbReference type="KEGG" id="afu:AF_2393"/>
<dbReference type="eggNOG" id="arCOG04938">
    <property type="taxonomic scope" value="Archaea"/>
</dbReference>
<dbReference type="HOGENOM" id="CLU_1987488_0_0_2"/>
<dbReference type="Proteomes" id="UP000002199">
    <property type="component" value="Chromosome"/>
</dbReference>
<dbReference type="GO" id="GO:0005886">
    <property type="term" value="C:plasma membrane"/>
    <property type="evidence" value="ECO:0007669"/>
    <property type="project" value="UniProtKB-SubCell"/>
</dbReference>
<evidence type="ECO:0000255" key="1"/>
<evidence type="ECO:0000305" key="2"/>
<proteinExistence type="predicted"/>
<gene>
    <name type="ordered locus">AF_2393</name>
</gene>
<organism>
    <name type="scientific">Archaeoglobus fulgidus (strain ATCC 49558 / DSM 4304 / JCM 9628 / NBRC 100126 / VC-16)</name>
    <dbReference type="NCBI Taxonomy" id="224325"/>
    <lineage>
        <taxon>Archaea</taxon>
        <taxon>Methanobacteriati</taxon>
        <taxon>Methanobacteriota</taxon>
        <taxon>Archaeoglobi</taxon>
        <taxon>Archaeoglobales</taxon>
        <taxon>Archaeoglobaceae</taxon>
        <taxon>Archaeoglobus</taxon>
    </lineage>
</organism>
<keyword id="KW-1003">Cell membrane</keyword>
<keyword id="KW-0472">Membrane</keyword>
<keyword id="KW-1185">Reference proteome</keyword>
<keyword id="KW-0812">Transmembrane</keyword>
<keyword id="KW-1133">Transmembrane helix</keyword>
<reference key="1">
    <citation type="journal article" date="1997" name="Nature">
        <title>The complete genome sequence of the hyperthermophilic, sulphate-reducing archaeon Archaeoglobus fulgidus.</title>
        <authorList>
            <person name="Klenk H.-P."/>
            <person name="Clayton R.A."/>
            <person name="Tomb J.-F."/>
            <person name="White O."/>
            <person name="Nelson K.E."/>
            <person name="Ketchum K.A."/>
            <person name="Dodson R.J."/>
            <person name="Gwinn M.L."/>
            <person name="Hickey E.K."/>
            <person name="Peterson J.D."/>
            <person name="Richardson D.L."/>
            <person name="Kerlavage A.R."/>
            <person name="Graham D.E."/>
            <person name="Kyrpides N.C."/>
            <person name="Fleischmann R.D."/>
            <person name="Quackenbush J."/>
            <person name="Lee N.H."/>
            <person name="Sutton G.G."/>
            <person name="Gill S.R."/>
            <person name="Kirkness E.F."/>
            <person name="Dougherty B.A."/>
            <person name="McKenney K."/>
            <person name="Adams M.D."/>
            <person name="Loftus B.J."/>
            <person name="Peterson S.N."/>
            <person name="Reich C.I."/>
            <person name="McNeil L.K."/>
            <person name="Badger J.H."/>
            <person name="Glodek A."/>
            <person name="Zhou L."/>
            <person name="Overbeek R."/>
            <person name="Gocayne J.D."/>
            <person name="Weidman J.F."/>
            <person name="McDonald L.A."/>
            <person name="Utterback T.R."/>
            <person name="Cotton M.D."/>
            <person name="Spriggs T."/>
            <person name="Artiach P."/>
            <person name="Kaine B.P."/>
            <person name="Sykes S.M."/>
            <person name="Sadow P.W."/>
            <person name="D'Andrea K.P."/>
            <person name="Bowman C."/>
            <person name="Fujii C."/>
            <person name="Garland S.A."/>
            <person name="Mason T.M."/>
            <person name="Olsen G.J."/>
            <person name="Fraser C.M."/>
            <person name="Smith H.O."/>
            <person name="Woese C.R."/>
            <person name="Venter J.C."/>
        </authorList>
    </citation>
    <scope>NUCLEOTIDE SEQUENCE [LARGE SCALE GENOMIC DNA]</scope>
    <source>
        <strain>ATCC 49558 / DSM 4304 / JCM 9628 / NBRC 100126 / VC-16</strain>
    </source>
</reference>
<protein>
    <recommendedName>
        <fullName>Uncharacterized protein AF_2393</fullName>
    </recommendedName>
</protein>
<comment type="subcellular location">
    <subcellularLocation>
        <location evidence="2">Cell membrane</location>
        <topology evidence="2">Multi-pass membrane protein</topology>
    </subcellularLocation>
</comment>
<name>Y2393_ARCFU</name>